<name>DCTA_AGRFC</name>
<evidence type="ECO:0000255" key="1">
    <source>
        <dbReference type="HAMAP-Rule" id="MF_01300"/>
    </source>
</evidence>
<sequence>MIDSTAVAAGHAKQPFYKHLYFQVLVAIIAGIALGHFYPTFGEQLKPLGDGFIRLVKMIIAPVIFLTVATGIAGMNDMKKVGRVAGKAMIYFLVFSTLALIVGLIVANTVQPGAGMNIDPATLDAKAVATYADKAHEQTITGFLMNIIPTTIVGAFASGDILQVLFFSVLFGIALGIVGEKGKPVTDFMHAMMYPIFKLVAILMKAAPIGAFGAMAFTIGKYGISSVTNLAMLIGTFYITSALFVFVVLGAVCRYNGFSIVALIRYIKEELLLVLGTSSSEAALPGLMSKMEKAGCKRSVVGLVIPTGYSFNLDGTNIYMTLAALFIAQATGIHLSFGEQILLLLVAMLSSKGAAGITGAGFITLAATLSVVPSVPVAGMALILGIDRFMSECRALTNFVGNAVATIVVARWEGELDQEQLARVLSGKEEFTSIADVDALPASVQPAE</sequence>
<gene>
    <name evidence="1" type="primary">dctA</name>
    <name type="ordered locus">Atu3298</name>
    <name type="ORF">AGR_L_3041</name>
</gene>
<protein>
    <recommendedName>
        <fullName evidence="1">C4-dicarboxylate transport protein</fullName>
    </recommendedName>
</protein>
<organism>
    <name type="scientific">Agrobacterium fabrum (strain C58 / ATCC 33970)</name>
    <name type="common">Agrobacterium tumefaciens (strain C58)</name>
    <dbReference type="NCBI Taxonomy" id="176299"/>
    <lineage>
        <taxon>Bacteria</taxon>
        <taxon>Pseudomonadati</taxon>
        <taxon>Pseudomonadota</taxon>
        <taxon>Alphaproteobacteria</taxon>
        <taxon>Hyphomicrobiales</taxon>
        <taxon>Rhizobiaceae</taxon>
        <taxon>Rhizobium/Agrobacterium group</taxon>
        <taxon>Agrobacterium</taxon>
        <taxon>Agrobacterium tumefaciens complex</taxon>
    </lineage>
</organism>
<reference key="1">
    <citation type="journal article" date="2001" name="Science">
        <title>The genome of the natural genetic engineer Agrobacterium tumefaciens C58.</title>
        <authorList>
            <person name="Wood D.W."/>
            <person name="Setubal J.C."/>
            <person name="Kaul R."/>
            <person name="Monks D.E."/>
            <person name="Kitajima J.P."/>
            <person name="Okura V.K."/>
            <person name="Zhou Y."/>
            <person name="Chen L."/>
            <person name="Wood G.E."/>
            <person name="Almeida N.F. Jr."/>
            <person name="Woo L."/>
            <person name="Chen Y."/>
            <person name="Paulsen I.T."/>
            <person name="Eisen J.A."/>
            <person name="Karp P.D."/>
            <person name="Bovee D. Sr."/>
            <person name="Chapman P."/>
            <person name="Clendenning J."/>
            <person name="Deatherage G."/>
            <person name="Gillet W."/>
            <person name="Grant C."/>
            <person name="Kutyavin T."/>
            <person name="Levy R."/>
            <person name="Li M.-J."/>
            <person name="McClelland E."/>
            <person name="Palmieri A."/>
            <person name="Raymond C."/>
            <person name="Rouse G."/>
            <person name="Saenphimmachak C."/>
            <person name="Wu Z."/>
            <person name="Romero P."/>
            <person name="Gordon D."/>
            <person name="Zhang S."/>
            <person name="Yoo H."/>
            <person name="Tao Y."/>
            <person name="Biddle P."/>
            <person name="Jung M."/>
            <person name="Krespan W."/>
            <person name="Perry M."/>
            <person name="Gordon-Kamm B."/>
            <person name="Liao L."/>
            <person name="Kim S."/>
            <person name="Hendrick C."/>
            <person name="Zhao Z.-Y."/>
            <person name="Dolan M."/>
            <person name="Chumley F."/>
            <person name="Tingey S.V."/>
            <person name="Tomb J.-F."/>
            <person name="Gordon M.P."/>
            <person name="Olson M.V."/>
            <person name="Nester E.W."/>
        </authorList>
    </citation>
    <scope>NUCLEOTIDE SEQUENCE [LARGE SCALE GENOMIC DNA]</scope>
    <source>
        <strain>C58 / ATCC 33970</strain>
    </source>
</reference>
<reference key="2">
    <citation type="journal article" date="2001" name="Science">
        <title>Genome sequence of the plant pathogen and biotechnology agent Agrobacterium tumefaciens C58.</title>
        <authorList>
            <person name="Goodner B."/>
            <person name="Hinkle G."/>
            <person name="Gattung S."/>
            <person name="Miller N."/>
            <person name="Blanchard M."/>
            <person name="Qurollo B."/>
            <person name="Goldman B.S."/>
            <person name="Cao Y."/>
            <person name="Askenazi M."/>
            <person name="Halling C."/>
            <person name="Mullin L."/>
            <person name="Houmiel K."/>
            <person name="Gordon J."/>
            <person name="Vaudin M."/>
            <person name="Iartchouk O."/>
            <person name="Epp A."/>
            <person name="Liu F."/>
            <person name="Wollam C."/>
            <person name="Allinger M."/>
            <person name="Doughty D."/>
            <person name="Scott C."/>
            <person name="Lappas C."/>
            <person name="Markelz B."/>
            <person name="Flanagan C."/>
            <person name="Crowell C."/>
            <person name="Gurson J."/>
            <person name="Lomo C."/>
            <person name="Sear C."/>
            <person name="Strub G."/>
            <person name="Cielo C."/>
            <person name="Slater S."/>
        </authorList>
    </citation>
    <scope>NUCLEOTIDE SEQUENCE [LARGE SCALE GENOMIC DNA]</scope>
    <source>
        <strain>C58 / ATCC 33970</strain>
    </source>
</reference>
<feature type="chain" id="PRO_0000202089" description="C4-dicarboxylate transport protein">
    <location>
        <begin position="1"/>
        <end position="448"/>
    </location>
</feature>
<feature type="transmembrane region" description="Helical" evidence="1">
    <location>
        <begin position="20"/>
        <end position="38"/>
    </location>
</feature>
<feature type="transmembrane region" description="Helical" evidence="1">
    <location>
        <begin position="53"/>
        <end position="75"/>
    </location>
</feature>
<feature type="transmembrane region" description="Helical" evidence="1">
    <location>
        <begin position="88"/>
        <end position="110"/>
    </location>
</feature>
<feature type="transmembrane region" description="Helical" evidence="1">
    <location>
        <begin position="161"/>
        <end position="178"/>
    </location>
</feature>
<feature type="transmembrane region" description="Helical" evidence="1">
    <location>
        <begin position="199"/>
        <end position="220"/>
    </location>
</feature>
<feature type="transmembrane region" description="Helical" evidence="1">
    <location>
        <begin position="230"/>
        <end position="252"/>
    </location>
</feature>
<feature type="transmembrane region" description="Helical" evidence="1">
    <location>
        <begin position="325"/>
        <end position="347"/>
    </location>
</feature>
<feature type="transmembrane region" description="Helical" evidence="1">
    <location>
        <begin position="362"/>
        <end position="384"/>
    </location>
</feature>
<dbReference type="EMBL" id="AE007870">
    <property type="protein sequence ID" value="AAK90092.1"/>
    <property type="molecule type" value="Genomic_DNA"/>
</dbReference>
<dbReference type="PIR" id="AD2962">
    <property type="entry name" value="AD2962"/>
</dbReference>
<dbReference type="PIR" id="B98321">
    <property type="entry name" value="B98321"/>
</dbReference>
<dbReference type="RefSeq" id="NP_357307.1">
    <property type="nucleotide sequence ID" value="NC_003063.2"/>
</dbReference>
<dbReference type="RefSeq" id="WP_006315269.1">
    <property type="nucleotide sequence ID" value="NC_003063.2"/>
</dbReference>
<dbReference type="SMR" id="P58734"/>
<dbReference type="STRING" id="176299.Atu3298"/>
<dbReference type="EnsemblBacteria" id="AAK90092">
    <property type="protein sequence ID" value="AAK90092"/>
    <property type="gene ID" value="Atu3298"/>
</dbReference>
<dbReference type="GeneID" id="1135172"/>
<dbReference type="KEGG" id="atu:Atu3298"/>
<dbReference type="PATRIC" id="fig|176299.10.peg.3139"/>
<dbReference type="eggNOG" id="COG1301">
    <property type="taxonomic scope" value="Bacteria"/>
</dbReference>
<dbReference type="HOGENOM" id="CLU_019375_7_0_5"/>
<dbReference type="OrthoDB" id="9766690at2"/>
<dbReference type="PhylomeDB" id="P58734"/>
<dbReference type="BioCyc" id="AGRO:ATU3298-MONOMER"/>
<dbReference type="Proteomes" id="UP000000813">
    <property type="component" value="Chromosome linear"/>
</dbReference>
<dbReference type="GO" id="GO:0005886">
    <property type="term" value="C:plasma membrane"/>
    <property type="evidence" value="ECO:0007669"/>
    <property type="project" value="UniProtKB-SubCell"/>
</dbReference>
<dbReference type="GO" id="GO:0015138">
    <property type="term" value="F:fumarate transmembrane transporter activity"/>
    <property type="evidence" value="ECO:0007669"/>
    <property type="project" value="TreeGrafter"/>
</dbReference>
<dbReference type="GO" id="GO:0015366">
    <property type="term" value="F:malate:proton symporter activity"/>
    <property type="evidence" value="ECO:0007669"/>
    <property type="project" value="TreeGrafter"/>
</dbReference>
<dbReference type="GO" id="GO:0015141">
    <property type="term" value="F:succinate transmembrane transporter activity"/>
    <property type="evidence" value="ECO:0007669"/>
    <property type="project" value="TreeGrafter"/>
</dbReference>
<dbReference type="GO" id="GO:0070778">
    <property type="term" value="P:L-aspartate transmembrane transport"/>
    <property type="evidence" value="ECO:0007669"/>
    <property type="project" value="TreeGrafter"/>
</dbReference>
<dbReference type="FunFam" id="1.10.3860.10:FF:000001">
    <property type="entry name" value="C4-dicarboxylate transport protein"/>
    <property type="match status" value="1"/>
</dbReference>
<dbReference type="Gene3D" id="1.10.3860.10">
    <property type="entry name" value="Sodium:dicarboxylate symporter"/>
    <property type="match status" value="1"/>
</dbReference>
<dbReference type="HAMAP" id="MF_01300">
    <property type="entry name" value="C4_dicarb_transport"/>
    <property type="match status" value="1"/>
</dbReference>
<dbReference type="InterPro" id="IPR023954">
    <property type="entry name" value="C4_dicarb_transport"/>
</dbReference>
<dbReference type="InterPro" id="IPR001991">
    <property type="entry name" value="Na-dicarboxylate_symporter"/>
</dbReference>
<dbReference type="InterPro" id="IPR018107">
    <property type="entry name" value="Na-dicarboxylate_symporter_CS"/>
</dbReference>
<dbReference type="InterPro" id="IPR036458">
    <property type="entry name" value="Na:dicarbo_symporter_sf"/>
</dbReference>
<dbReference type="NCBIfam" id="NF002461">
    <property type="entry name" value="PRK01663.1"/>
    <property type="match status" value="1"/>
</dbReference>
<dbReference type="NCBIfam" id="NF009587">
    <property type="entry name" value="PRK13027.1"/>
    <property type="match status" value="1"/>
</dbReference>
<dbReference type="PANTHER" id="PTHR42865:SF1">
    <property type="entry name" value="AEROBIC C4-DICARBOXYLATE TRANSPORT PROTEIN"/>
    <property type="match status" value="1"/>
</dbReference>
<dbReference type="PANTHER" id="PTHR42865">
    <property type="entry name" value="PROTON/GLUTAMATE-ASPARTATE SYMPORTER"/>
    <property type="match status" value="1"/>
</dbReference>
<dbReference type="Pfam" id="PF00375">
    <property type="entry name" value="SDF"/>
    <property type="match status" value="1"/>
</dbReference>
<dbReference type="PRINTS" id="PR00173">
    <property type="entry name" value="EDTRNSPORT"/>
</dbReference>
<dbReference type="SUPFAM" id="SSF118215">
    <property type="entry name" value="Proton glutamate symport protein"/>
    <property type="match status" value="1"/>
</dbReference>
<dbReference type="PROSITE" id="PS00713">
    <property type="entry name" value="NA_DICARBOXYL_SYMP_1"/>
    <property type="match status" value="1"/>
</dbReference>
<dbReference type="PROSITE" id="PS00714">
    <property type="entry name" value="NA_DICARBOXYL_SYMP_2"/>
    <property type="match status" value="1"/>
</dbReference>
<comment type="function">
    <text evidence="1">Responsible for the transport of dicarboxylates such as succinate, fumarate, and malate from the periplasm across the membrane.</text>
</comment>
<comment type="subcellular location">
    <subcellularLocation>
        <location evidence="1">Cell inner membrane</location>
        <topology evidence="1">Multi-pass membrane protein</topology>
    </subcellularLocation>
</comment>
<comment type="similarity">
    <text evidence="1">Belongs to the dicarboxylate/amino acid:cation symporter (DAACS) (TC 2.A.23) family.</text>
</comment>
<proteinExistence type="inferred from homology"/>
<keyword id="KW-0997">Cell inner membrane</keyword>
<keyword id="KW-1003">Cell membrane</keyword>
<keyword id="KW-0472">Membrane</keyword>
<keyword id="KW-1185">Reference proteome</keyword>
<keyword id="KW-0769">Symport</keyword>
<keyword id="KW-0812">Transmembrane</keyword>
<keyword id="KW-1133">Transmembrane helix</keyword>
<keyword id="KW-0813">Transport</keyword>
<accession>P58734</accession>